<organism>
    <name type="scientific">Jannaschia sp. (strain CCS1)</name>
    <dbReference type="NCBI Taxonomy" id="290400"/>
    <lineage>
        <taxon>Bacteria</taxon>
        <taxon>Pseudomonadati</taxon>
        <taxon>Pseudomonadota</taxon>
        <taxon>Alphaproteobacteria</taxon>
        <taxon>Rhodobacterales</taxon>
        <taxon>Roseobacteraceae</taxon>
        <taxon>Jannaschia</taxon>
    </lineage>
</organism>
<gene>
    <name evidence="1" type="primary">katG</name>
    <name type="ordered locus">Jann_1586</name>
</gene>
<proteinExistence type="inferred from homology"/>
<comment type="function">
    <text evidence="1">Bifunctional enzyme with both catalase and broad-spectrum peroxidase activity.</text>
</comment>
<comment type="catalytic activity">
    <reaction evidence="1">
        <text>H2O2 + AH2 = A + 2 H2O</text>
        <dbReference type="Rhea" id="RHEA:30275"/>
        <dbReference type="ChEBI" id="CHEBI:13193"/>
        <dbReference type="ChEBI" id="CHEBI:15377"/>
        <dbReference type="ChEBI" id="CHEBI:16240"/>
        <dbReference type="ChEBI" id="CHEBI:17499"/>
        <dbReference type="EC" id="1.11.1.21"/>
    </reaction>
</comment>
<comment type="catalytic activity">
    <reaction evidence="1">
        <text>2 H2O2 = O2 + 2 H2O</text>
        <dbReference type="Rhea" id="RHEA:20309"/>
        <dbReference type="ChEBI" id="CHEBI:15377"/>
        <dbReference type="ChEBI" id="CHEBI:15379"/>
        <dbReference type="ChEBI" id="CHEBI:16240"/>
        <dbReference type="EC" id="1.11.1.21"/>
    </reaction>
</comment>
<comment type="cofactor">
    <cofactor evidence="1">
        <name>heme b</name>
        <dbReference type="ChEBI" id="CHEBI:60344"/>
    </cofactor>
    <text evidence="1">Binds 1 heme b (iron(II)-protoporphyrin IX) group per dimer.</text>
</comment>
<comment type="subunit">
    <text evidence="1">Homodimer or homotetramer.</text>
</comment>
<comment type="PTM">
    <text evidence="1">Formation of the three residue Trp-Tyr-Met cross-link is important for the catalase, but not the peroxidase activity of the enzyme.</text>
</comment>
<comment type="similarity">
    <text evidence="1">Belongs to the peroxidase family. Peroxidase/catalase subfamily.</text>
</comment>
<accession>Q28S09</accession>
<sequence length="735" mass="79928">MMDGAQTNSGGCPVMHGGGSRPMGATANQHWWPNQLNLKPLSANSEKLDPMGEGFDYAEEFQKLDMAAVKADIANCLKDSQDWWPADYGHYGPLMIRLAWHSAGTYRTYDGRGGAGTGTQRFAPLNSWPDNGNLDKARRILWPIKEKYGKSLSWADLLILVGNVALEDMGFETFGFAGGRADVWEPEEDIYWGPETEWLATSDMENTRYGEGRDLHNPLAAVQMGLIYVNPQGPDGNPDPLASAFDIRDTFARMAMNDEETVALVAGGHTFGKAHGAGDPDLVGAEPEGADVAEMGLGWKNGFESGKGVHSTTSGVEGPWTPTPTQWDMSYFDVLFGHEWELTKSPAGAHQWRPVDHENDQAPQVDGNGTVPIMMTTADMAMRMDPAYEKISRDFHANPDKFADAFARAWYKLTHRDMGPIQRYLGNDVPSEELLWQDPVPMPQGPQVNDDEQAELKAAVAATGLTAAELVRVAWGSAASYRDSDKRGGANGARIRLQPARGWTVNNPEELDKVLPVLDSIADAFNGRGGTQITMADMIVLAGGVGVEMAAREAGHNIHVPFTPGRGDATQEQTDVDSYDVLEPTSDGFRNYHATFSLREPAEMLVDKAALLGLTAPEMTVLVGGLRAIGATHGGARHGVLTETPGALNNAFFKNVLSMDTVWNQTDSAILEGKDRASGQVKWTATIVDLVFGSNSQLRAVAEVYASADAEAKMVDDFVAAWVKVMENDRFDLHR</sequence>
<reference key="1">
    <citation type="submission" date="2006-02" db="EMBL/GenBank/DDBJ databases">
        <title>Complete sequence of chromosome of Jannaschia sp. CCS1.</title>
        <authorList>
            <consortium name="US DOE Joint Genome Institute"/>
            <person name="Copeland A."/>
            <person name="Lucas S."/>
            <person name="Lapidus A."/>
            <person name="Barry K."/>
            <person name="Detter J.C."/>
            <person name="Glavina del Rio T."/>
            <person name="Hammon N."/>
            <person name="Israni S."/>
            <person name="Pitluck S."/>
            <person name="Brettin T."/>
            <person name="Bruce D."/>
            <person name="Han C."/>
            <person name="Tapia R."/>
            <person name="Gilna P."/>
            <person name="Chertkov O."/>
            <person name="Saunders E."/>
            <person name="Schmutz J."/>
            <person name="Larimer F."/>
            <person name="Land M."/>
            <person name="Kyrpides N."/>
            <person name="Lykidis A."/>
            <person name="Moran M.A."/>
            <person name="Belas R."/>
            <person name="Ye W."/>
            <person name="Buchan A."/>
            <person name="Gonzalez J.M."/>
            <person name="Schell M.A."/>
            <person name="Richardson P."/>
        </authorList>
    </citation>
    <scope>NUCLEOTIDE SEQUENCE [LARGE SCALE GENOMIC DNA]</scope>
    <source>
        <strain>CCS1</strain>
    </source>
</reference>
<name>KATG_JANSC</name>
<dbReference type="EC" id="1.11.1.21" evidence="1"/>
<dbReference type="EMBL" id="CP000264">
    <property type="protein sequence ID" value="ABD54503.1"/>
    <property type="molecule type" value="Genomic_DNA"/>
</dbReference>
<dbReference type="SMR" id="Q28S09"/>
<dbReference type="STRING" id="290400.Jann_1586"/>
<dbReference type="PeroxiBase" id="3654">
    <property type="entry name" value="JspCP01_CCS1"/>
</dbReference>
<dbReference type="KEGG" id="jan:Jann_1586"/>
<dbReference type="eggNOG" id="COG0376">
    <property type="taxonomic scope" value="Bacteria"/>
</dbReference>
<dbReference type="HOGENOM" id="CLU_025424_2_0_5"/>
<dbReference type="OrthoDB" id="9759743at2"/>
<dbReference type="Proteomes" id="UP000008326">
    <property type="component" value="Chromosome"/>
</dbReference>
<dbReference type="GO" id="GO:0005829">
    <property type="term" value="C:cytosol"/>
    <property type="evidence" value="ECO:0007669"/>
    <property type="project" value="TreeGrafter"/>
</dbReference>
<dbReference type="GO" id="GO:0004096">
    <property type="term" value="F:catalase activity"/>
    <property type="evidence" value="ECO:0007669"/>
    <property type="project" value="UniProtKB-UniRule"/>
</dbReference>
<dbReference type="GO" id="GO:0020037">
    <property type="term" value="F:heme binding"/>
    <property type="evidence" value="ECO:0007669"/>
    <property type="project" value="InterPro"/>
</dbReference>
<dbReference type="GO" id="GO:0046872">
    <property type="term" value="F:metal ion binding"/>
    <property type="evidence" value="ECO:0007669"/>
    <property type="project" value="UniProtKB-KW"/>
</dbReference>
<dbReference type="GO" id="GO:0070301">
    <property type="term" value="P:cellular response to hydrogen peroxide"/>
    <property type="evidence" value="ECO:0007669"/>
    <property type="project" value="TreeGrafter"/>
</dbReference>
<dbReference type="GO" id="GO:0042744">
    <property type="term" value="P:hydrogen peroxide catabolic process"/>
    <property type="evidence" value="ECO:0007669"/>
    <property type="project" value="UniProtKB-KW"/>
</dbReference>
<dbReference type="CDD" id="cd00649">
    <property type="entry name" value="catalase_peroxidase_1"/>
    <property type="match status" value="1"/>
</dbReference>
<dbReference type="CDD" id="cd08200">
    <property type="entry name" value="catalase_peroxidase_2"/>
    <property type="match status" value="1"/>
</dbReference>
<dbReference type="FunFam" id="1.10.520.10:FF:000002">
    <property type="entry name" value="Catalase-peroxidase"/>
    <property type="match status" value="1"/>
</dbReference>
<dbReference type="Gene3D" id="1.10.520.10">
    <property type="match status" value="2"/>
</dbReference>
<dbReference type="Gene3D" id="1.10.420.10">
    <property type="entry name" value="Peroxidase, domain 2"/>
    <property type="match status" value="2"/>
</dbReference>
<dbReference type="HAMAP" id="MF_01961">
    <property type="entry name" value="Catal_peroxid"/>
    <property type="match status" value="1"/>
</dbReference>
<dbReference type="InterPro" id="IPR000763">
    <property type="entry name" value="Catalase_peroxidase"/>
</dbReference>
<dbReference type="InterPro" id="IPR002016">
    <property type="entry name" value="Haem_peroxidase"/>
</dbReference>
<dbReference type="InterPro" id="IPR010255">
    <property type="entry name" value="Haem_peroxidase_sf"/>
</dbReference>
<dbReference type="InterPro" id="IPR019794">
    <property type="entry name" value="Peroxidases_AS"/>
</dbReference>
<dbReference type="InterPro" id="IPR019793">
    <property type="entry name" value="Peroxidases_heam-ligand_BS"/>
</dbReference>
<dbReference type="NCBIfam" id="TIGR00198">
    <property type="entry name" value="cat_per_HPI"/>
    <property type="match status" value="1"/>
</dbReference>
<dbReference type="NCBIfam" id="NF011635">
    <property type="entry name" value="PRK15061.1"/>
    <property type="match status" value="1"/>
</dbReference>
<dbReference type="PANTHER" id="PTHR30555:SF0">
    <property type="entry name" value="CATALASE-PEROXIDASE"/>
    <property type="match status" value="1"/>
</dbReference>
<dbReference type="PANTHER" id="PTHR30555">
    <property type="entry name" value="HYDROPEROXIDASE I, BIFUNCTIONAL CATALASE-PEROXIDASE"/>
    <property type="match status" value="1"/>
</dbReference>
<dbReference type="Pfam" id="PF00141">
    <property type="entry name" value="peroxidase"/>
    <property type="match status" value="2"/>
</dbReference>
<dbReference type="PRINTS" id="PR00460">
    <property type="entry name" value="BPEROXIDASE"/>
</dbReference>
<dbReference type="PRINTS" id="PR00458">
    <property type="entry name" value="PEROXIDASE"/>
</dbReference>
<dbReference type="SUPFAM" id="SSF48113">
    <property type="entry name" value="Heme-dependent peroxidases"/>
    <property type="match status" value="2"/>
</dbReference>
<dbReference type="PROSITE" id="PS00435">
    <property type="entry name" value="PEROXIDASE_1"/>
    <property type="match status" value="1"/>
</dbReference>
<dbReference type="PROSITE" id="PS00436">
    <property type="entry name" value="PEROXIDASE_2"/>
    <property type="match status" value="1"/>
</dbReference>
<dbReference type="PROSITE" id="PS50873">
    <property type="entry name" value="PEROXIDASE_4"/>
    <property type="match status" value="1"/>
</dbReference>
<keyword id="KW-0349">Heme</keyword>
<keyword id="KW-0376">Hydrogen peroxide</keyword>
<keyword id="KW-0408">Iron</keyword>
<keyword id="KW-0479">Metal-binding</keyword>
<keyword id="KW-0560">Oxidoreductase</keyword>
<keyword id="KW-0575">Peroxidase</keyword>
<keyword id="KW-1185">Reference proteome</keyword>
<evidence type="ECO:0000255" key="1">
    <source>
        <dbReference type="HAMAP-Rule" id="MF_01961"/>
    </source>
</evidence>
<evidence type="ECO:0000256" key="2">
    <source>
        <dbReference type="SAM" id="MobiDB-lite"/>
    </source>
</evidence>
<protein>
    <recommendedName>
        <fullName evidence="1">Catalase-peroxidase</fullName>
        <shortName evidence="1">CP</shortName>
        <ecNumber evidence="1">1.11.1.21</ecNumber>
    </recommendedName>
    <alternativeName>
        <fullName evidence="1">Peroxidase/catalase</fullName>
    </alternativeName>
</protein>
<feature type="chain" id="PRO_0000354812" description="Catalase-peroxidase">
    <location>
        <begin position="1"/>
        <end position="735"/>
    </location>
</feature>
<feature type="region of interest" description="Disordered" evidence="2">
    <location>
        <begin position="1"/>
        <end position="20"/>
    </location>
</feature>
<feature type="compositionally biased region" description="Polar residues" evidence="2">
    <location>
        <begin position="1"/>
        <end position="10"/>
    </location>
</feature>
<feature type="active site" description="Proton acceptor" evidence="1">
    <location>
        <position position="101"/>
    </location>
</feature>
<feature type="binding site" description="axial binding residue" evidence="1">
    <location>
        <position position="269"/>
    </location>
    <ligand>
        <name>heme b</name>
        <dbReference type="ChEBI" id="CHEBI:60344"/>
    </ligand>
    <ligandPart>
        <name>Fe</name>
        <dbReference type="ChEBI" id="CHEBI:18248"/>
    </ligandPart>
</feature>
<feature type="site" description="Transition state stabilizer" evidence="1">
    <location>
        <position position="97"/>
    </location>
</feature>
<feature type="cross-link" description="Tryptophyl-tyrosyl-methioninium (Trp-Tyr) (with M-254)" evidence="1">
    <location>
        <begin position="100"/>
        <end position="228"/>
    </location>
</feature>
<feature type="cross-link" description="Tryptophyl-tyrosyl-methioninium (Tyr-Met) (with W-100)" evidence="1">
    <location>
        <begin position="228"/>
        <end position="254"/>
    </location>
</feature>